<keyword id="KW-1185">Reference proteome</keyword>
<feature type="chain" id="PRO_0000050062" description="Uncharacterized protein YybC">
    <location>
        <begin position="1"/>
        <end position="159"/>
    </location>
</feature>
<sequence length="159" mass="17570">MPANKKEGLIFGVMMCFGMVCVMSIYNAIINRAIYDFSLMTVFEMVIGFMIALLLDLLLVGPLAKKIAFRMPFDKTKKIYVILAMSTCMVIGMVLCMSVFGLVTAVLANGLNGDSLFSAYLMIVLKNFILAYPLQLLIMGPLVRGVFMKFVKPKLTAAI</sequence>
<accession>P37501</accession>
<dbReference type="EMBL" id="D26185">
    <property type="protein sequence ID" value="BAA05200.1"/>
    <property type="molecule type" value="Genomic_DNA"/>
</dbReference>
<dbReference type="EMBL" id="AL009126">
    <property type="protein sequence ID" value="CAB16106.1"/>
    <property type="molecule type" value="Genomic_DNA"/>
</dbReference>
<dbReference type="PIR" id="S65994">
    <property type="entry name" value="S65994"/>
</dbReference>
<dbReference type="RefSeq" id="NP_391949.1">
    <property type="nucleotide sequence ID" value="NC_000964.3"/>
</dbReference>
<dbReference type="RefSeq" id="WP_003243923.1">
    <property type="nucleotide sequence ID" value="NZ_OZ025638.1"/>
</dbReference>
<dbReference type="SMR" id="P37501"/>
<dbReference type="FunCoup" id="P37501">
    <property type="interactions" value="198"/>
</dbReference>
<dbReference type="STRING" id="224308.BSU40690"/>
<dbReference type="PaxDb" id="224308-BSU40690"/>
<dbReference type="DNASU" id="937862"/>
<dbReference type="EnsemblBacteria" id="CAB16106">
    <property type="protein sequence ID" value="CAB16106"/>
    <property type="gene ID" value="BSU_40690"/>
</dbReference>
<dbReference type="GeneID" id="937862"/>
<dbReference type="KEGG" id="bsu:BSU40690"/>
<dbReference type="PATRIC" id="fig|224308.179.peg.4411"/>
<dbReference type="eggNOG" id="ENOG5032QWV">
    <property type="taxonomic scope" value="Bacteria"/>
</dbReference>
<dbReference type="InParanoid" id="P37501"/>
<dbReference type="OrthoDB" id="7062363at2"/>
<dbReference type="BioCyc" id="BSUB:BSU40690-MONOMER"/>
<dbReference type="Proteomes" id="UP000001570">
    <property type="component" value="Chromosome"/>
</dbReference>
<reference key="1">
    <citation type="journal article" date="1994" name="DNA Res.">
        <title>Systematic sequencing of the 180 kilobase region of the Bacillus subtilis chromosome containing the replication origin.</title>
        <authorList>
            <person name="Ogasawara N."/>
            <person name="Nakai S."/>
            <person name="Yoshikawa H."/>
        </authorList>
    </citation>
    <scope>NUCLEOTIDE SEQUENCE [GENOMIC DNA]</scope>
    <source>
        <strain>168</strain>
    </source>
</reference>
<reference key="2">
    <citation type="journal article" date="1997" name="Nature">
        <title>The complete genome sequence of the Gram-positive bacterium Bacillus subtilis.</title>
        <authorList>
            <person name="Kunst F."/>
            <person name="Ogasawara N."/>
            <person name="Moszer I."/>
            <person name="Albertini A.M."/>
            <person name="Alloni G."/>
            <person name="Azevedo V."/>
            <person name="Bertero M.G."/>
            <person name="Bessieres P."/>
            <person name="Bolotin A."/>
            <person name="Borchert S."/>
            <person name="Borriss R."/>
            <person name="Boursier L."/>
            <person name="Brans A."/>
            <person name="Braun M."/>
            <person name="Brignell S.C."/>
            <person name="Bron S."/>
            <person name="Brouillet S."/>
            <person name="Bruschi C.V."/>
            <person name="Caldwell B."/>
            <person name="Capuano V."/>
            <person name="Carter N.M."/>
            <person name="Choi S.-K."/>
            <person name="Codani J.-J."/>
            <person name="Connerton I.F."/>
            <person name="Cummings N.J."/>
            <person name="Daniel R.A."/>
            <person name="Denizot F."/>
            <person name="Devine K.M."/>
            <person name="Duesterhoeft A."/>
            <person name="Ehrlich S.D."/>
            <person name="Emmerson P.T."/>
            <person name="Entian K.-D."/>
            <person name="Errington J."/>
            <person name="Fabret C."/>
            <person name="Ferrari E."/>
            <person name="Foulger D."/>
            <person name="Fritz C."/>
            <person name="Fujita M."/>
            <person name="Fujita Y."/>
            <person name="Fuma S."/>
            <person name="Galizzi A."/>
            <person name="Galleron N."/>
            <person name="Ghim S.-Y."/>
            <person name="Glaser P."/>
            <person name="Goffeau A."/>
            <person name="Golightly E.J."/>
            <person name="Grandi G."/>
            <person name="Guiseppi G."/>
            <person name="Guy B.J."/>
            <person name="Haga K."/>
            <person name="Haiech J."/>
            <person name="Harwood C.R."/>
            <person name="Henaut A."/>
            <person name="Hilbert H."/>
            <person name="Holsappel S."/>
            <person name="Hosono S."/>
            <person name="Hullo M.-F."/>
            <person name="Itaya M."/>
            <person name="Jones L.-M."/>
            <person name="Joris B."/>
            <person name="Karamata D."/>
            <person name="Kasahara Y."/>
            <person name="Klaerr-Blanchard M."/>
            <person name="Klein C."/>
            <person name="Kobayashi Y."/>
            <person name="Koetter P."/>
            <person name="Koningstein G."/>
            <person name="Krogh S."/>
            <person name="Kumano M."/>
            <person name="Kurita K."/>
            <person name="Lapidus A."/>
            <person name="Lardinois S."/>
            <person name="Lauber J."/>
            <person name="Lazarevic V."/>
            <person name="Lee S.-M."/>
            <person name="Levine A."/>
            <person name="Liu H."/>
            <person name="Masuda S."/>
            <person name="Mauel C."/>
            <person name="Medigue C."/>
            <person name="Medina N."/>
            <person name="Mellado R.P."/>
            <person name="Mizuno M."/>
            <person name="Moestl D."/>
            <person name="Nakai S."/>
            <person name="Noback M."/>
            <person name="Noone D."/>
            <person name="O'Reilly M."/>
            <person name="Ogawa K."/>
            <person name="Ogiwara A."/>
            <person name="Oudega B."/>
            <person name="Park S.-H."/>
            <person name="Parro V."/>
            <person name="Pohl T.M."/>
            <person name="Portetelle D."/>
            <person name="Porwollik S."/>
            <person name="Prescott A.M."/>
            <person name="Presecan E."/>
            <person name="Pujic P."/>
            <person name="Purnelle B."/>
            <person name="Rapoport G."/>
            <person name="Rey M."/>
            <person name="Reynolds S."/>
            <person name="Rieger M."/>
            <person name="Rivolta C."/>
            <person name="Rocha E."/>
            <person name="Roche B."/>
            <person name="Rose M."/>
            <person name="Sadaie Y."/>
            <person name="Sato T."/>
            <person name="Scanlan E."/>
            <person name="Schleich S."/>
            <person name="Schroeter R."/>
            <person name="Scoffone F."/>
            <person name="Sekiguchi J."/>
            <person name="Sekowska A."/>
            <person name="Seror S.J."/>
            <person name="Serror P."/>
            <person name="Shin B.-S."/>
            <person name="Soldo B."/>
            <person name="Sorokin A."/>
            <person name="Tacconi E."/>
            <person name="Takagi T."/>
            <person name="Takahashi H."/>
            <person name="Takemaru K."/>
            <person name="Takeuchi M."/>
            <person name="Tamakoshi A."/>
            <person name="Tanaka T."/>
            <person name="Terpstra P."/>
            <person name="Tognoni A."/>
            <person name="Tosato V."/>
            <person name="Uchiyama S."/>
            <person name="Vandenbol M."/>
            <person name="Vannier F."/>
            <person name="Vassarotti A."/>
            <person name="Viari A."/>
            <person name="Wambutt R."/>
            <person name="Wedler E."/>
            <person name="Wedler H."/>
            <person name="Weitzenegger T."/>
            <person name="Winters P."/>
            <person name="Wipat A."/>
            <person name="Yamamoto H."/>
            <person name="Yamane K."/>
            <person name="Yasumoto K."/>
            <person name="Yata K."/>
            <person name="Yoshida K."/>
            <person name="Yoshikawa H.-F."/>
            <person name="Zumstein E."/>
            <person name="Yoshikawa H."/>
            <person name="Danchin A."/>
        </authorList>
    </citation>
    <scope>NUCLEOTIDE SEQUENCE [LARGE SCALE GENOMIC DNA]</scope>
    <source>
        <strain>168</strain>
    </source>
</reference>
<organism>
    <name type="scientific">Bacillus subtilis (strain 168)</name>
    <dbReference type="NCBI Taxonomy" id="224308"/>
    <lineage>
        <taxon>Bacteria</taxon>
        <taxon>Bacillati</taxon>
        <taxon>Bacillota</taxon>
        <taxon>Bacilli</taxon>
        <taxon>Bacillales</taxon>
        <taxon>Bacillaceae</taxon>
        <taxon>Bacillus</taxon>
    </lineage>
</organism>
<protein>
    <recommendedName>
        <fullName>Uncharacterized protein YybC</fullName>
    </recommendedName>
</protein>
<proteinExistence type="predicted"/>
<name>YYBC_BACSU</name>
<gene>
    <name type="primary">yybC</name>
    <name type="ordered locus">BSU40690</name>
</gene>